<sequence length="135" mass="14965">MSDLALTWHNGEGDLVLGTESLLLDDSLTNAIIISLFTDLRVEGERGWWGDSYNDGFQTGSKLWTLSRAKQLPEILDDAQLYASQALQWLVDDGVAKSVQVIASNPQMSVLLLEILVVLPDGSTEQRTFRANWSL</sequence>
<accession>P44239</accession>
<proteinExistence type="predicted"/>
<name>VG46_HAEIN</name>
<dbReference type="EMBL" id="L42023">
    <property type="protein sequence ID" value="AAC23169.1"/>
    <property type="molecule type" value="Genomic_DNA"/>
</dbReference>
<dbReference type="PIR" id="F64034">
    <property type="entry name" value="F64034"/>
</dbReference>
<dbReference type="RefSeq" id="NP_439668.1">
    <property type="nucleotide sequence ID" value="NC_000907.1"/>
</dbReference>
<dbReference type="SMR" id="P44239"/>
<dbReference type="STRING" id="71421.HI_1519"/>
<dbReference type="EnsemblBacteria" id="AAC23169">
    <property type="protein sequence ID" value="AAC23169"/>
    <property type="gene ID" value="HI_1519"/>
</dbReference>
<dbReference type="KEGG" id="hin:HI_1519"/>
<dbReference type="PATRIC" id="fig|71421.8.peg.1590"/>
<dbReference type="eggNOG" id="COG4381">
    <property type="taxonomic scope" value="Bacteria"/>
</dbReference>
<dbReference type="HOGENOM" id="CLU_119472_0_0_6"/>
<dbReference type="OrthoDB" id="5677166at2"/>
<dbReference type="PhylomeDB" id="P44239"/>
<dbReference type="BioCyc" id="HINF71421:G1GJ1-1541-MONOMER"/>
<dbReference type="Proteomes" id="UP000000579">
    <property type="component" value="Chromosome"/>
</dbReference>
<dbReference type="InterPro" id="IPR010877">
    <property type="entry name" value="Phage_Mu_Gp46"/>
</dbReference>
<dbReference type="Pfam" id="PF07409">
    <property type="entry name" value="GP46"/>
    <property type="match status" value="1"/>
</dbReference>
<reference key="1">
    <citation type="journal article" date="1995" name="Science">
        <title>Whole-genome random sequencing and assembly of Haemophilus influenzae Rd.</title>
        <authorList>
            <person name="Fleischmann R.D."/>
            <person name="Adams M.D."/>
            <person name="White O."/>
            <person name="Clayton R.A."/>
            <person name="Kirkness E.F."/>
            <person name="Kerlavage A.R."/>
            <person name="Bult C.J."/>
            <person name="Tomb J.-F."/>
            <person name="Dougherty B.A."/>
            <person name="Merrick J.M."/>
            <person name="McKenney K."/>
            <person name="Sutton G.G."/>
            <person name="FitzHugh W."/>
            <person name="Fields C.A."/>
            <person name="Gocayne J.D."/>
            <person name="Scott J.D."/>
            <person name="Shirley R."/>
            <person name="Liu L.-I."/>
            <person name="Glodek A."/>
            <person name="Kelley J.M."/>
            <person name="Weidman J.F."/>
            <person name="Phillips C.A."/>
            <person name="Spriggs T."/>
            <person name="Hedblom E."/>
            <person name="Cotton M.D."/>
            <person name="Utterback T.R."/>
            <person name="Hanna M.C."/>
            <person name="Nguyen D.T."/>
            <person name="Saudek D.M."/>
            <person name="Brandon R.C."/>
            <person name="Fine L.D."/>
            <person name="Fritchman J.L."/>
            <person name="Fuhrmann J.L."/>
            <person name="Geoghagen N.S.M."/>
            <person name="Gnehm C.L."/>
            <person name="McDonald L.A."/>
            <person name="Small K.V."/>
            <person name="Fraser C.M."/>
            <person name="Smith H.O."/>
            <person name="Venter J.C."/>
        </authorList>
    </citation>
    <scope>NUCLEOTIDE SEQUENCE [LARGE SCALE GENOMIC DNA]</scope>
    <source>
        <strain>ATCC 51907 / DSM 11121 / KW20 / Rd</strain>
    </source>
</reference>
<organism>
    <name type="scientific">Haemophilus influenzae (strain ATCC 51907 / DSM 11121 / KW20 / Rd)</name>
    <dbReference type="NCBI Taxonomy" id="71421"/>
    <lineage>
        <taxon>Bacteria</taxon>
        <taxon>Pseudomonadati</taxon>
        <taxon>Pseudomonadota</taxon>
        <taxon>Gammaproteobacteria</taxon>
        <taxon>Pasteurellales</taxon>
        <taxon>Pasteurellaceae</taxon>
        <taxon>Haemophilus</taxon>
    </lineage>
</organism>
<evidence type="ECO:0000305" key="1"/>
<protein>
    <recommendedName>
        <fullName>Mu-like prophage FluMu protein gp46</fullName>
    </recommendedName>
</protein>
<comment type="similarity">
    <text evidence="1">To phage Mu protein gp46.</text>
</comment>
<keyword id="KW-1185">Reference proteome</keyword>
<gene>
    <name type="ordered locus">HI_1519</name>
</gene>
<feature type="chain" id="PRO_0000077841" description="Mu-like prophage FluMu protein gp46">
    <location>
        <begin position="1"/>
        <end position="135"/>
    </location>
</feature>